<dbReference type="EMBL" id="AM884177">
    <property type="protein sequence ID" value="CAP06928.1"/>
    <property type="molecule type" value="Genomic_DNA"/>
</dbReference>
<dbReference type="RefSeq" id="WP_009873697.1">
    <property type="nucleotide sequence ID" value="NC_010280.2"/>
</dbReference>
<dbReference type="SMR" id="B0BBR3"/>
<dbReference type="KEGG" id="ctl:CTLon_0530"/>
<dbReference type="HOGENOM" id="CLU_097408_2_4_0"/>
<dbReference type="Proteomes" id="UP001154401">
    <property type="component" value="Chromosome"/>
</dbReference>
<dbReference type="GO" id="GO:0005829">
    <property type="term" value="C:cytosol"/>
    <property type="evidence" value="ECO:0007669"/>
    <property type="project" value="TreeGrafter"/>
</dbReference>
<dbReference type="GO" id="GO:0005960">
    <property type="term" value="C:glycine cleavage complex"/>
    <property type="evidence" value="ECO:0007669"/>
    <property type="project" value="InterPro"/>
</dbReference>
<dbReference type="GO" id="GO:0019464">
    <property type="term" value="P:glycine decarboxylation via glycine cleavage system"/>
    <property type="evidence" value="ECO:0007669"/>
    <property type="project" value="InterPro"/>
</dbReference>
<dbReference type="CDD" id="cd06848">
    <property type="entry name" value="GCS_H"/>
    <property type="match status" value="1"/>
</dbReference>
<dbReference type="Gene3D" id="2.40.50.100">
    <property type="match status" value="1"/>
</dbReference>
<dbReference type="InterPro" id="IPR003016">
    <property type="entry name" value="2-oxoA_DH_lipoyl-BS"/>
</dbReference>
<dbReference type="InterPro" id="IPR000089">
    <property type="entry name" value="Biotin_lipoyl"/>
</dbReference>
<dbReference type="InterPro" id="IPR002930">
    <property type="entry name" value="GCV_H"/>
</dbReference>
<dbReference type="InterPro" id="IPR033753">
    <property type="entry name" value="GCV_H/Fam206"/>
</dbReference>
<dbReference type="InterPro" id="IPR017514">
    <property type="entry name" value="GcvH_Chlamydia"/>
</dbReference>
<dbReference type="InterPro" id="IPR011053">
    <property type="entry name" value="Single_hybrid_motif"/>
</dbReference>
<dbReference type="NCBIfam" id="TIGR03077">
    <property type="entry name" value="not_gcvH"/>
    <property type="match status" value="1"/>
</dbReference>
<dbReference type="PANTHER" id="PTHR11715">
    <property type="entry name" value="GLYCINE CLEAVAGE SYSTEM H PROTEIN"/>
    <property type="match status" value="1"/>
</dbReference>
<dbReference type="PANTHER" id="PTHR11715:SF3">
    <property type="entry name" value="GLYCINE CLEAVAGE SYSTEM H PROTEIN-RELATED"/>
    <property type="match status" value="1"/>
</dbReference>
<dbReference type="Pfam" id="PF01597">
    <property type="entry name" value="GCV_H"/>
    <property type="match status" value="1"/>
</dbReference>
<dbReference type="SUPFAM" id="SSF51230">
    <property type="entry name" value="Single hybrid motif"/>
    <property type="match status" value="1"/>
</dbReference>
<dbReference type="PROSITE" id="PS50968">
    <property type="entry name" value="BIOTINYL_LIPOYL"/>
    <property type="match status" value="1"/>
</dbReference>
<dbReference type="PROSITE" id="PS00189">
    <property type="entry name" value="LIPOYL"/>
    <property type="match status" value="1"/>
</dbReference>
<accession>B0BBR3</accession>
<evidence type="ECO:0000255" key="1">
    <source>
        <dbReference type="PROSITE-ProRule" id="PRU01066"/>
    </source>
</evidence>
<evidence type="ECO:0000305" key="2"/>
<evidence type="ECO:0000312" key="3">
    <source>
        <dbReference type="EMBL" id="CAP06928.1"/>
    </source>
</evidence>
<organism>
    <name type="scientific">Chlamydia trachomatis serovar L2b (strain UCH-1/proctitis)</name>
    <dbReference type="NCBI Taxonomy" id="471473"/>
    <lineage>
        <taxon>Bacteria</taxon>
        <taxon>Pseudomonadati</taxon>
        <taxon>Chlamydiota</taxon>
        <taxon>Chlamydiia</taxon>
        <taxon>Chlamydiales</taxon>
        <taxon>Chlamydiaceae</taxon>
        <taxon>Chlamydia/Chlamydophila group</taxon>
        <taxon>Chlamydia</taxon>
    </lineage>
</organism>
<name>GCSHL_CHLTB</name>
<keyword id="KW-0450">Lipoyl</keyword>
<proteinExistence type="inferred from homology"/>
<reference key="1">
    <citation type="journal article" date="2008" name="Genome Res.">
        <title>Chlamydia trachomatis: genome sequence analysis of lymphogranuloma venereum isolates.</title>
        <authorList>
            <person name="Thomson N.R."/>
            <person name="Holden M.T.G."/>
            <person name="Carder C."/>
            <person name="Lennard N."/>
            <person name="Lockey S.J."/>
            <person name="Marsh P."/>
            <person name="Skipp P."/>
            <person name="O'Connor C.D."/>
            <person name="Goodhead I."/>
            <person name="Norbertzcak H."/>
            <person name="Harris B."/>
            <person name="Ormond D."/>
            <person name="Rance R."/>
            <person name="Quail M.A."/>
            <person name="Parkhill J."/>
            <person name="Stephens R.S."/>
            <person name="Clarke I.N."/>
        </authorList>
    </citation>
    <scope>NUCLEOTIDE SEQUENCE [LARGE SCALE GENOMIC DNA]</scope>
    <source>
        <strain>UCH-1/proctitis</strain>
    </source>
</reference>
<protein>
    <recommendedName>
        <fullName evidence="2">Glycine cleavage system H-like protein</fullName>
    </recommendedName>
</protein>
<gene>
    <name evidence="3" type="primary">gcsH</name>
    <name type="ordered locus">CTLon_0530</name>
</gene>
<sequence>MKGQKYYSDYHVWIEPIHSRIVKLGLSSQMREHLGNILHIDLPSVGSFIKEGEELCILESSKSAIEVLSPVSGEVLEVNTALEDDILPVNNATESEGWFVVLQLTEDFRSESFSLEP</sequence>
<comment type="cofactor">
    <cofactor evidence="1">
        <name>(R)-lipoate</name>
        <dbReference type="ChEBI" id="CHEBI:83088"/>
    </cofactor>
    <text evidence="1">Binds 1 lipoyl cofactor covalently.</text>
</comment>
<comment type="similarity">
    <text evidence="2">Belongs to the GcvH family.</text>
</comment>
<feature type="chain" id="PRO_1000114510" description="Glycine cleavage system H-like protein">
    <location>
        <begin position="1"/>
        <end position="117"/>
    </location>
</feature>
<feature type="domain" description="Lipoyl-binding" evidence="1">
    <location>
        <begin position="21"/>
        <end position="103"/>
    </location>
</feature>
<feature type="modified residue" description="N6-lipoyllysine" evidence="1">
    <location>
        <position position="62"/>
    </location>
</feature>